<comment type="function">
    <text evidence="1 2">Substrate-recognition component of a DCX (DDB1-CUL4-X-box) E3 ubiquitin-protein ligase complex of the DesCEND (destruction via C-end degrons) pathway, which recognizes a C-degron located at the extreme C terminus of target proteins, leading to their ubiquitination and degradation. The C-degron recognized by the DesCEND pathway is usually a motif of less than ten residues and can be present in full-length proteins, truncated proteins or proteolytically cleaved forms (By similarity). The DCX(DCAF12) complex specifically recognizes proteins with a diglutamate (Glu-Glu) at the C-terminus, such as MAGEA3, MAGEA6 and CCT5, leading to their ubiquitination and degradation. Ubiquitination of MAGEA3, MAGEA6 by DCX(DCAF12) complex is required for starvation-induced autophagy (By similarity). Also directly recognizes the C-terminal glutamate-leucine (Glu-Leu) degron as an alternative degron in proteins such as MOV10, leading to their ubiquitination and degradation. Controls the protein level of MOV10 during spermatogenesis and in T cells, especially after their activation (By similarity).</text>
</comment>
<comment type="pathway">
    <text evidence="1">Protein modification; protein ubiquitination.</text>
</comment>
<comment type="subunit">
    <text evidence="1">Component of the DCX(DCAF12) E3 ubiquitin ligase complex, at least composed of CUL4 (CUL4A or CUL4B), DDB1, DCAF12 and RBX1.</text>
</comment>
<comment type="subcellular location">
    <subcellularLocation>
        <location evidence="1">Cytoplasm</location>
    </subcellularLocation>
    <subcellularLocation>
        <location evidence="1">Cytoplasm</location>
        <location evidence="1">Cytoskeleton</location>
        <location evidence="1">Microtubule organizing center</location>
        <location evidence="1">Centrosome</location>
    </subcellularLocation>
    <subcellularLocation>
        <location evidence="1">Nucleus</location>
    </subcellularLocation>
</comment>
<comment type="similarity">
    <text evidence="4">Belongs to the WD repeat DCAF12 family.</text>
</comment>
<name>DCA12_BOVIN</name>
<feature type="chain" id="PRO_0000306839" description="DDB1- and CUL4-associated factor 12">
    <location>
        <begin position="1"/>
        <end position="453"/>
    </location>
</feature>
<feature type="repeat" description="WD 1">
    <location>
        <begin position="138"/>
        <end position="178"/>
    </location>
</feature>
<feature type="repeat" description="WD 2">
    <location>
        <begin position="182"/>
        <end position="220"/>
    </location>
</feature>
<feature type="repeat" description="WD 3">
    <location>
        <begin position="250"/>
        <end position="289"/>
    </location>
</feature>
<feature type="repeat" description="WD 4">
    <location>
        <begin position="338"/>
        <end position="375"/>
    </location>
</feature>
<feature type="region of interest" description="Required for nuclear location and interaction with MOV10" evidence="1">
    <location>
        <begin position="1"/>
        <end position="38"/>
    </location>
</feature>
<feature type="region of interest" description="Disordered" evidence="3">
    <location>
        <begin position="1"/>
        <end position="27"/>
    </location>
</feature>
<feature type="compositionally biased region" description="Basic residues" evidence="3">
    <location>
        <begin position="1"/>
        <end position="12"/>
    </location>
</feature>
<feature type="sequence conflict" description="In Ref. 1; AAI05242." evidence="4" ref="1">
    <original>A</original>
    <variation>S</variation>
    <location>
        <position position="2"/>
    </location>
</feature>
<keyword id="KW-0963">Cytoplasm</keyword>
<keyword id="KW-0206">Cytoskeleton</keyword>
<keyword id="KW-0539">Nucleus</keyword>
<keyword id="KW-1185">Reference proteome</keyword>
<keyword id="KW-0677">Repeat</keyword>
<keyword id="KW-0833">Ubl conjugation pathway</keyword>
<keyword id="KW-0853">WD repeat</keyword>
<gene>
    <name type="primary">DCAF12</name>
    <name type="synonym">WDR40A</name>
</gene>
<organism>
    <name type="scientific">Bos taurus</name>
    <name type="common">Bovine</name>
    <dbReference type="NCBI Taxonomy" id="9913"/>
    <lineage>
        <taxon>Eukaryota</taxon>
        <taxon>Metazoa</taxon>
        <taxon>Chordata</taxon>
        <taxon>Craniata</taxon>
        <taxon>Vertebrata</taxon>
        <taxon>Euteleostomi</taxon>
        <taxon>Mammalia</taxon>
        <taxon>Eutheria</taxon>
        <taxon>Laurasiatheria</taxon>
        <taxon>Artiodactyla</taxon>
        <taxon>Ruminantia</taxon>
        <taxon>Pecora</taxon>
        <taxon>Bovidae</taxon>
        <taxon>Bovinae</taxon>
        <taxon>Bos</taxon>
    </lineage>
</organism>
<reference key="1">
    <citation type="submission" date="2007-07" db="EMBL/GenBank/DDBJ databases">
        <authorList>
            <consortium name="NIH - Mammalian Gene Collection (MGC) project"/>
        </authorList>
    </citation>
    <scope>NUCLEOTIDE SEQUENCE [LARGE SCALE MRNA]</scope>
    <source>
        <strain>Hereford</strain>
        <tissue>Fetal liver</tissue>
        <tissue>Fetal muscle</tissue>
    </source>
</reference>
<accession>Q3MHH0</accession>
<accession>A6QR04</accession>
<sequence length="453" mass="50636">MARKAVSRKRKAPALPGAGSDAQDPQFGWDHSLHKRKRLPPVKRSLVYYLKNREVRLQNETSYSRVLHGYAAQQLPSLLKEREFHLGTLNKVFASQWLNHRQVVCGTKCNTLFVVDVQTSQITKIPILKDREPGCVTQQGCGIHAIELNPSRTLLATGGDNPNSLAIYRLPTLDPVCVGDDGHKDWIFSIAWISDTMAVSGSRDGSMGLWEVTDDVLTKSDARHNVSRVPVYSHITHKALKDIPKEDTNPDNCKVRALAFNNKNKELGAVSLDGYFHLWKTENTLSKLLSTKLPYCRENVCLAYGNEWSVYAVGSQAHVSFLDPRQPSYNVKSVCSRERGSGIRSVSFYEHIITVGTGQGSLLFYDIRAQRFLEEKLSACYGSKPKLAGENLKLTTGKGWLNHDETWRNYFSDIDFFPNAVYTHCYDSSGTKLFVAGGPLPSGLHGNYAGLWS</sequence>
<proteinExistence type="evidence at transcript level"/>
<evidence type="ECO:0000250" key="1">
    <source>
        <dbReference type="UniProtKB" id="Q5T6F0"/>
    </source>
</evidence>
<evidence type="ECO:0000250" key="2">
    <source>
        <dbReference type="UniProtKB" id="Q8BGZ3"/>
    </source>
</evidence>
<evidence type="ECO:0000256" key="3">
    <source>
        <dbReference type="SAM" id="MobiDB-lite"/>
    </source>
</evidence>
<evidence type="ECO:0000305" key="4"/>
<protein>
    <recommendedName>
        <fullName evidence="4">DDB1- and CUL4-associated factor 12</fullName>
    </recommendedName>
    <alternativeName>
        <fullName>WD repeat-containing protein 40A</fullName>
    </alternativeName>
</protein>
<dbReference type="EMBL" id="BC105241">
    <property type="protein sequence ID" value="AAI05242.1"/>
    <property type="molecule type" value="mRNA"/>
</dbReference>
<dbReference type="EMBL" id="BC150062">
    <property type="protein sequence ID" value="AAI50063.1"/>
    <property type="molecule type" value="mRNA"/>
</dbReference>
<dbReference type="RefSeq" id="NP_001161368.1">
    <property type="nucleotide sequence ID" value="NM_001167896.2"/>
</dbReference>
<dbReference type="SMR" id="Q3MHH0"/>
<dbReference type="FunCoup" id="Q3MHH0">
    <property type="interactions" value="2270"/>
</dbReference>
<dbReference type="STRING" id="9913.ENSBTAP00000028744"/>
<dbReference type="PaxDb" id="9913-ENSBTAP00000028744"/>
<dbReference type="Ensembl" id="ENSBTAT00000028744.7">
    <property type="protein sequence ID" value="ENSBTAP00000028744.5"/>
    <property type="gene ID" value="ENSBTAG00000021573.7"/>
</dbReference>
<dbReference type="GeneID" id="525161"/>
<dbReference type="KEGG" id="bta:525161"/>
<dbReference type="CTD" id="25853"/>
<dbReference type="VEuPathDB" id="HostDB:ENSBTAG00000021573"/>
<dbReference type="VGNC" id="VGNC:27901">
    <property type="gene designation" value="DCAF12"/>
</dbReference>
<dbReference type="eggNOG" id="ENOG502QR7U">
    <property type="taxonomic scope" value="Eukaryota"/>
</dbReference>
<dbReference type="GeneTree" id="ENSGT00940000158028"/>
<dbReference type="HOGENOM" id="CLU_020124_1_0_1"/>
<dbReference type="InParanoid" id="Q3MHH0"/>
<dbReference type="OMA" id="GGEQYGW"/>
<dbReference type="OrthoDB" id="9610195at2759"/>
<dbReference type="TreeFam" id="TF323731"/>
<dbReference type="UniPathway" id="UPA00143"/>
<dbReference type="Proteomes" id="UP000009136">
    <property type="component" value="Chromosome 8"/>
</dbReference>
<dbReference type="Bgee" id="ENSBTAG00000021573">
    <property type="expression patterns" value="Expressed in semen and 105 other cell types or tissues"/>
</dbReference>
<dbReference type="GO" id="GO:0005813">
    <property type="term" value="C:centrosome"/>
    <property type="evidence" value="ECO:0007669"/>
    <property type="project" value="UniProtKB-SubCell"/>
</dbReference>
<dbReference type="GO" id="GO:0080008">
    <property type="term" value="C:Cul4-RING E3 ubiquitin ligase complex"/>
    <property type="evidence" value="ECO:0000250"/>
    <property type="project" value="UniProtKB"/>
</dbReference>
<dbReference type="GO" id="GO:0005829">
    <property type="term" value="C:cytosol"/>
    <property type="evidence" value="ECO:0007669"/>
    <property type="project" value="Ensembl"/>
</dbReference>
<dbReference type="GO" id="GO:0005634">
    <property type="term" value="C:nucleus"/>
    <property type="evidence" value="ECO:0007669"/>
    <property type="project" value="UniProtKB-SubCell"/>
</dbReference>
<dbReference type="GO" id="GO:1990756">
    <property type="term" value="F:ubiquitin-like ligase-substrate adaptor activity"/>
    <property type="evidence" value="ECO:0000250"/>
    <property type="project" value="UniProtKB"/>
</dbReference>
<dbReference type="GO" id="GO:0016567">
    <property type="term" value="P:protein ubiquitination"/>
    <property type="evidence" value="ECO:0007669"/>
    <property type="project" value="UniProtKB-UniPathway"/>
</dbReference>
<dbReference type="GO" id="GO:0010506">
    <property type="term" value="P:regulation of autophagy"/>
    <property type="evidence" value="ECO:0000250"/>
    <property type="project" value="UniProtKB"/>
</dbReference>
<dbReference type="GO" id="GO:0042110">
    <property type="term" value="P:T cell activation"/>
    <property type="evidence" value="ECO:0007669"/>
    <property type="project" value="Ensembl"/>
</dbReference>
<dbReference type="GO" id="GO:0140627">
    <property type="term" value="P:ubiquitin-dependent protein catabolic process via the C-end degron rule pathway"/>
    <property type="evidence" value="ECO:0000250"/>
    <property type="project" value="UniProtKB"/>
</dbReference>
<dbReference type="FunFam" id="2.130.10.10:FF:001190">
    <property type="entry name" value="DDB1 and CUL4 associated factor 12"/>
    <property type="match status" value="1"/>
</dbReference>
<dbReference type="FunFam" id="2.130.10.10:FF:000253">
    <property type="entry name" value="DDB1- and CUL4-associated factor 12"/>
    <property type="match status" value="1"/>
</dbReference>
<dbReference type="Gene3D" id="2.130.10.10">
    <property type="entry name" value="YVTN repeat-like/Quinoprotein amine dehydrogenase"/>
    <property type="match status" value="2"/>
</dbReference>
<dbReference type="InterPro" id="IPR056151">
    <property type="entry name" value="Beta-prop_DCAF12"/>
</dbReference>
<dbReference type="InterPro" id="IPR051191">
    <property type="entry name" value="DCAF12"/>
</dbReference>
<dbReference type="InterPro" id="IPR015943">
    <property type="entry name" value="WD40/YVTN_repeat-like_dom_sf"/>
</dbReference>
<dbReference type="InterPro" id="IPR019775">
    <property type="entry name" value="WD40_repeat_CS"/>
</dbReference>
<dbReference type="InterPro" id="IPR036322">
    <property type="entry name" value="WD40_repeat_dom_sf"/>
</dbReference>
<dbReference type="InterPro" id="IPR001680">
    <property type="entry name" value="WD40_rpt"/>
</dbReference>
<dbReference type="PANTHER" id="PTHR19860:SF10">
    <property type="entry name" value="DDB1- AND CUL4-ASSOCIATED FACTOR 12"/>
    <property type="match status" value="1"/>
</dbReference>
<dbReference type="PANTHER" id="PTHR19860">
    <property type="entry name" value="DDB1- AND CUL4-ASSOCIATED FACTOR 12-RELATED"/>
    <property type="match status" value="1"/>
</dbReference>
<dbReference type="Pfam" id="PF23760">
    <property type="entry name" value="Beta-prop_DCAF12"/>
    <property type="match status" value="1"/>
</dbReference>
<dbReference type="SMART" id="SM00320">
    <property type="entry name" value="WD40"/>
    <property type="match status" value="4"/>
</dbReference>
<dbReference type="SUPFAM" id="SSF50978">
    <property type="entry name" value="WD40 repeat-like"/>
    <property type="match status" value="1"/>
</dbReference>
<dbReference type="PROSITE" id="PS00678">
    <property type="entry name" value="WD_REPEATS_1"/>
    <property type="match status" value="1"/>
</dbReference>
<dbReference type="PROSITE" id="PS50082">
    <property type="entry name" value="WD_REPEATS_2"/>
    <property type="match status" value="1"/>
</dbReference>
<dbReference type="PROSITE" id="PS50294">
    <property type="entry name" value="WD_REPEATS_REGION"/>
    <property type="match status" value="1"/>
</dbReference>